<reference key="1">
    <citation type="journal article" date="1995" name="Science">
        <title>Whole-genome random sequencing and assembly of Haemophilus influenzae Rd.</title>
        <authorList>
            <person name="Fleischmann R.D."/>
            <person name="Adams M.D."/>
            <person name="White O."/>
            <person name="Clayton R.A."/>
            <person name="Kirkness E.F."/>
            <person name="Kerlavage A.R."/>
            <person name="Bult C.J."/>
            <person name="Tomb J.-F."/>
            <person name="Dougherty B.A."/>
            <person name="Merrick J.M."/>
            <person name="McKenney K."/>
            <person name="Sutton G.G."/>
            <person name="FitzHugh W."/>
            <person name="Fields C.A."/>
            <person name="Gocayne J.D."/>
            <person name="Scott J.D."/>
            <person name="Shirley R."/>
            <person name="Liu L.-I."/>
            <person name="Glodek A."/>
            <person name="Kelley J.M."/>
            <person name="Weidman J.F."/>
            <person name="Phillips C.A."/>
            <person name="Spriggs T."/>
            <person name="Hedblom E."/>
            <person name="Cotton M.D."/>
            <person name="Utterback T.R."/>
            <person name="Hanna M.C."/>
            <person name="Nguyen D.T."/>
            <person name="Saudek D.M."/>
            <person name="Brandon R.C."/>
            <person name="Fine L.D."/>
            <person name="Fritchman J.L."/>
            <person name="Fuhrmann J.L."/>
            <person name="Geoghagen N.S.M."/>
            <person name="Gnehm C.L."/>
            <person name="McDonald L.A."/>
            <person name="Small K.V."/>
            <person name="Fraser C.M."/>
            <person name="Smith H.O."/>
            <person name="Venter J.C."/>
        </authorList>
    </citation>
    <scope>NUCLEOTIDE SEQUENCE [LARGE SCALE GENOMIC DNA]</scope>
    <source>
        <strain>ATCC 51907 / DSM 11121 / KW20 / Rd</strain>
    </source>
</reference>
<reference key="2">
    <citation type="journal article" date="2000" name="Electrophoresis">
        <title>Two-dimensional map of the proteome of Haemophilus influenzae.</title>
        <authorList>
            <person name="Langen H."/>
            <person name="Takacs B."/>
            <person name="Evers S."/>
            <person name="Berndt P."/>
            <person name="Lahm H.W."/>
            <person name="Wipf B."/>
            <person name="Gray C."/>
            <person name="Fountoulakis M."/>
        </authorList>
    </citation>
    <scope>IDENTIFICATION BY MASS SPECTROMETRY</scope>
    <source>
        <strain>ATCC 51907 / DSM 11121 / KW20 / Rd</strain>
    </source>
</reference>
<feature type="signal peptide" evidence="2">
    <location>
        <begin position="1"/>
        <end position="18"/>
    </location>
</feature>
<feature type="chain" id="PRO_0000034281" description="Uncharacterized protein HI_1453">
    <location>
        <begin position="19"/>
        <end position="156"/>
    </location>
</feature>
<feature type="domain" description="Thioredoxin">
    <location>
        <begin position="19"/>
        <end position="156"/>
    </location>
</feature>
<feature type="disulfide bond" description="Redox-active" evidence="1">
    <location>
        <begin position="54"/>
        <end position="57"/>
    </location>
</feature>
<comment type="similarity">
    <text evidence="3">Belongs to the thioredoxin family.</text>
</comment>
<proteinExistence type="evidence at protein level"/>
<dbReference type="EMBL" id="L42023">
    <property type="protein sequence ID" value="AAC23101.1"/>
    <property type="molecule type" value="Genomic_DNA"/>
</dbReference>
<dbReference type="PIR" id="D64124">
    <property type="entry name" value="D64124"/>
</dbReference>
<dbReference type="RefSeq" id="NP_439604.1">
    <property type="nucleotide sequence ID" value="NC_000907.1"/>
</dbReference>
<dbReference type="SMR" id="Q57127"/>
<dbReference type="STRING" id="71421.HI_1453"/>
<dbReference type="EnsemblBacteria" id="AAC23101">
    <property type="protein sequence ID" value="AAC23101"/>
    <property type="gene ID" value="HI_1453"/>
</dbReference>
<dbReference type="KEGG" id="hin:HI_1453"/>
<dbReference type="PATRIC" id="fig|71421.8.peg.1514"/>
<dbReference type="eggNOG" id="COG0526">
    <property type="taxonomic scope" value="Bacteria"/>
</dbReference>
<dbReference type="HOGENOM" id="CLU_042529_9_0_6"/>
<dbReference type="OrthoDB" id="9799347at2"/>
<dbReference type="PhylomeDB" id="Q57127"/>
<dbReference type="BioCyc" id="HINF71421:G1GJ1-1478-MONOMER"/>
<dbReference type="Proteomes" id="UP000000579">
    <property type="component" value="Chromosome"/>
</dbReference>
<dbReference type="GO" id="GO:0016209">
    <property type="term" value="F:antioxidant activity"/>
    <property type="evidence" value="ECO:0007669"/>
    <property type="project" value="InterPro"/>
</dbReference>
<dbReference type="GO" id="GO:0016491">
    <property type="term" value="F:oxidoreductase activity"/>
    <property type="evidence" value="ECO:0007669"/>
    <property type="project" value="InterPro"/>
</dbReference>
<dbReference type="CDD" id="cd02966">
    <property type="entry name" value="TlpA_like_family"/>
    <property type="match status" value="1"/>
</dbReference>
<dbReference type="Gene3D" id="3.40.30.10">
    <property type="entry name" value="Glutaredoxin"/>
    <property type="match status" value="1"/>
</dbReference>
<dbReference type="InterPro" id="IPR000866">
    <property type="entry name" value="AhpC/TSA"/>
</dbReference>
<dbReference type="InterPro" id="IPR036249">
    <property type="entry name" value="Thioredoxin-like_sf"/>
</dbReference>
<dbReference type="InterPro" id="IPR013766">
    <property type="entry name" value="Thioredoxin_domain"/>
</dbReference>
<dbReference type="InterPro" id="IPR050553">
    <property type="entry name" value="Thioredoxin_ResA/DsbE_sf"/>
</dbReference>
<dbReference type="PANTHER" id="PTHR42852">
    <property type="entry name" value="THIOL:DISULFIDE INTERCHANGE PROTEIN DSBE"/>
    <property type="match status" value="1"/>
</dbReference>
<dbReference type="PANTHER" id="PTHR42852:SF16">
    <property type="entry name" value="THIOL:DISULFIDE INTERCHANGE PROTEIN TLPA"/>
    <property type="match status" value="1"/>
</dbReference>
<dbReference type="Pfam" id="PF00578">
    <property type="entry name" value="AhpC-TSA"/>
    <property type="match status" value="1"/>
</dbReference>
<dbReference type="SUPFAM" id="SSF52833">
    <property type="entry name" value="Thioredoxin-like"/>
    <property type="match status" value="1"/>
</dbReference>
<name>Y1453_HAEIN</name>
<gene>
    <name type="ordered locus">HI_1453</name>
</gene>
<sequence>MKKLLSIFLMAFSLNAFAQTNLADVQLKDLNNQPVTLSQYKGKPVYVKMWASWCPICLAGLAEIDDLSAEKDRNFEVITIVSPDHKGEKDTADFIEWYKGLEYKNITVLLDEKGEIIDKARVRGYPFNLFLDSDLNLKKTVPGHLGAEQIRVFAEK</sequence>
<keyword id="KW-1015">Disulfide bond</keyword>
<keyword id="KW-0676">Redox-active center</keyword>
<keyword id="KW-1185">Reference proteome</keyword>
<keyword id="KW-0732">Signal</keyword>
<evidence type="ECO:0000250" key="1"/>
<evidence type="ECO:0000255" key="2"/>
<evidence type="ECO:0000305" key="3"/>
<accession>Q57127</accession>
<accession>O05062</accession>
<protein>
    <recommendedName>
        <fullName>Uncharacterized protein HI_1453</fullName>
    </recommendedName>
</protein>
<organism>
    <name type="scientific">Haemophilus influenzae (strain ATCC 51907 / DSM 11121 / KW20 / Rd)</name>
    <dbReference type="NCBI Taxonomy" id="71421"/>
    <lineage>
        <taxon>Bacteria</taxon>
        <taxon>Pseudomonadati</taxon>
        <taxon>Pseudomonadota</taxon>
        <taxon>Gammaproteobacteria</taxon>
        <taxon>Pasteurellales</taxon>
        <taxon>Pasteurellaceae</taxon>
        <taxon>Haemophilus</taxon>
    </lineage>
</organism>